<proteinExistence type="inferred from homology"/>
<dbReference type="EC" id="6.3.4.4" evidence="1"/>
<dbReference type="EMBL" id="CU207211">
    <property type="protein sequence ID" value="CAL61449.1"/>
    <property type="molecule type" value="Genomic_DNA"/>
</dbReference>
<dbReference type="SMR" id="A4G4L2"/>
<dbReference type="STRING" id="204773.HEAR1275"/>
<dbReference type="KEGG" id="har:HEAR1275"/>
<dbReference type="eggNOG" id="COG0104">
    <property type="taxonomic scope" value="Bacteria"/>
</dbReference>
<dbReference type="HOGENOM" id="CLU_029848_0_0_4"/>
<dbReference type="UniPathway" id="UPA00075">
    <property type="reaction ID" value="UER00335"/>
</dbReference>
<dbReference type="Proteomes" id="UP000006697">
    <property type="component" value="Chromosome"/>
</dbReference>
<dbReference type="GO" id="GO:0005737">
    <property type="term" value="C:cytoplasm"/>
    <property type="evidence" value="ECO:0007669"/>
    <property type="project" value="UniProtKB-SubCell"/>
</dbReference>
<dbReference type="GO" id="GO:0004019">
    <property type="term" value="F:adenylosuccinate synthase activity"/>
    <property type="evidence" value="ECO:0007669"/>
    <property type="project" value="UniProtKB-UniRule"/>
</dbReference>
<dbReference type="GO" id="GO:0005525">
    <property type="term" value="F:GTP binding"/>
    <property type="evidence" value="ECO:0007669"/>
    <property type="project" value="UniProtKB-UniRule"/>
</dbReference>
<dbReference type="GO" id="GO:0000287">
    <property type="term" value="F:magnesium ion binding"/>
    <property type="evidence" value="ECO:0007669"/>
    <property type="project" value="UniProtKB-UniRule"/>
</dbReference>
<dbReference type="GO" id="GO:0044208">
    <property type="term" value="P:'de novo' AMP biosynthetic process"/>
    <property type="evidence" value="ECO:0007669"/>
    <property type="project" value="UniProtKB-UniRule"/>
</dbReference>
<dbReference type="GO" id="GO:0046040">
    <property type="term" value="P:IMP metabolic process"/>
    <property type="evidence" value="ECO:0007669"/>
    <property type="project" value="TreeGrafter"/>
</dbReference>
<dbReference type="CDD" id="cd03108">
    <property type="entry name" value="AdSS"/>
    <property type="match status" value="1"/>
</dbReference>
<dbReference type="FunFam" id="1.10.300.10:FF:000001">
    <property type="entry name" value="Adenylosuccinate synthetase"/>
    <property type="match status" value="1"/>
</dbReference>
<dbReference type="FunFam" id="3.90.170.10:FF:000001">
    <property type="entry name" value="Adenylosuccinate synthetase"/>
    <property type="match status" value="1"/>
</dbReference>
<dbReference type="Gene3D" id="3.40.440.10">
    <property type="entry name" value="Adenylosuccinate Synthetase, subunit A, domain 1"/>
    <property type="match status" value="1"/>
</dbReference>
<dbReference type="Gene3D" id="1.10.300.10">
    <property type="entry name" value="Adenylosuccinate Synthetase, subunit A, domain 2"/>
    <property type="match status" value="1"/>
</dbReference>
<dbReference type="Gene3D" id="3.90.170.10">
    <property type="entry name" value="Adenylosuccinate Synthetase, subunit A, domain 3"/>
    <property type="match status" value="1"/>
</dbReference>
<dbReference type="HAMAP" id="MF_00011">
    <property type="entry name" value="Adenylosucc_synth"/>
    <property type="match status" value="1"/>
</dbReference>
<dbReference type="InterPro" id="IPR018220">
    <property type="entry name" value="Adenylosuccin_syn_GTP-bd"/>
</dbReference>
<dbReference type="InterPro" id="IPR033128">
    <property type="entry name" value="Adenylosuccin_syn_Lys_AS"/>
</dbReference>
<dbReference type="InterPro" id="IPR042109">
    <property type="entry name" value="Adenylosuccinate_synth_dom1"/>
</dbReference>
<dbReference type="InterPro" id="IPR042110">
    <property type="entry name" value="Adenylosuccinate_synth_dom2"/>
</dbReference>
<dbReference type="InterPro" id="IPR042111">
    <property type="entry name" value="Adenylosuccinate_synth_dom3"/>
</dbReference>
<dbReference type="InterPro" id="IPR001114">
    <property type="entry name" value="Adenylosuccinate_synthetase"/>
</dbReference>
<dbReference type="InterPro" id="IPR027417">
    <property type="entry name" value="P-loop_NTPase"/>
</dbReference>
<dbReference type="NCBIfam" id="NF002223">
    <property type="entry name" value="PRK01117.1"/>
    <property type="match status" value="1"/>
</dbReference>
<dbReference type="NCBIfam" id="TIGR00184">
    <property type="entry name" value="purA"/>
    <property type="match status" value="1"/>
</dbReference>
<dbReference type="PANTHER" id="PTHR11846">
    <property type="entry name" value="ADENYLOSUCCINATE SYNTHETASE"/>
    <property type="match status" value="1"/>
</dbReference>
<dbReference type="PANTHER" id="PTHR11846:SF0">
    <property type="entry name" value="ADENYLOSUCCINATE SYNTHETASE"/>
    <property type="match status" value="1"/>
</dbReference>
<dbReference type="Pfam" id="PF00709">
    <property type="entry name" value="Adenylsucc_synt"/>
    <property type="match status" value="1"/>
</dbReference>
<dbReference type="SMART" id="SM00788">
    <property type="entry name" value="Adenylsucc_synt"/>
    <property type="match status" value="1"/>
</dbReference>
<dbReference type="SUPFAM" id="SSF52540">
    <property type="entry name" value="P-loop containing nucleoside triphosphate hydrolases"/>
    <property type="match status" value="1"/>
</dbReference>
<dbReference type="PROSITE" id="PS01266">
    <property type="entry name" value="ADENYLOSUCCIN_SYN_1"/>
    <property type="match status" value="1"/>
</dbReference>
<dbReference type="PROSITE" id="PS00513">
    <property type="entry name" value="ADENYLOSUCCIN_SYN_2"/>
    <property type="match status" value="1"/>
</dbReference>
<evidence type="ECO:0000255" key="1">
    <source>
        <dbReference type="HAMAP-Rule" id="MF_00011"/>
    </source>
</evidence>
<gene>
    <name evidence="1" type="primary">purA</name>
    <name type="ordered locus">HEAR1275</name>
</gene>
<organism>
    <name type="scientific">Herminiimonas arsenicoxydans</name>
    <dbReference type="NCBI Taxonomy" id="204773"/>
    <lineage>
        <taxon>Bacteria</taxon>
        <taxon>Pseudomonadati</taxon>
        <taxon>Pseudomonadota</taxon>
        <taxon>Betaproteobacteria</taxon>
        <taxon>Burkholderiales</taxon>
        <taxon>Oxalobacteraceae</taxon>
        <taxon>Herminiimonas</taxon>
    </lineage>
</organism>
<name>PURA_HERAR</name>
<feature type="chain" id="PRO_0000321799" description="Adenylosuccinate synthetase">
    <location>
        <begin position="1"/>
        <end position="432"/>
    </location>
</feature>
<feature type="active site" description="Proton acceptor" evidence="1">
    <location>
        <position position="14"/>
    </location>
</feature>
<feature type="active site" description="Proton donor" evidence="1">
    <location>
        <position position="42"/>
    </location>
</feature>
<feature type="binding site" evidence="1">
    <location>
        <begin position="13"/>
        <end position="19"/>
    </location>
    <ligand>
        <name>GTP</name>
        <dbReference type="ChEBI" id="CHEBI:37565"/>
    </ligand>
</feature>
<feature type="binding site" description="in other chain" evidence="1">
    <location>
        <begin position="14"/>
        <end position="17"/>
    </location>
    <ligand>
        <name>IMP</name>
        <dbReference type="ChEBI" id="CHEBI:58053"/>
        <note>ligand shared between dimeric partners</note>
    </ligand>
</feature>
<feature type="binding site" evidence="1">
    <location>
        <position position="14"/>
    </location>
    <ligand>
        <name>Mg(2+)</name>
        <dbReference type="ChEBI" id="CHEBI:18420"/>
    </ligand>
</feature>
<feature type="binding site" description="in other chain" evidence="1">
    <location>
        <begin position="39"/>
        <end position="42"/>
    </location>
    <ligand>
        <name>IMP</name>
        <dbReference type="ChEBI" id="CHEBI:58053"/>
        <note>ligand shared between dimeric partners</note>
    </ligand>
</feature>
<feature type="binding site" evidence="1">
    <location>
        <begin position="41"/>
        <end position="43"/>
    </location>
    <ligand>
        <name>GTP</name>
        <dbReference type="ChEBI" id="CHEBI:37565"/>
    </ligand>
</feature>
<feature type="binding site" evidence="1">
    <location>
        <position position="41"/>
    </location>
    <ligand>
        <name>Mg(2+)</name>
        <dbReference type="ChEBI" id="CHEBI:18420"/>
    </ligand>
</feature>
<feature type="binding site" description="in other chain" evidence="1">
    <location>
        <position position="130"/>
    </location>
    <ligand>
        <name>IMP</name>
        <dbReference type="ChEBI" id="CHEBI:58053"/>
        <note>ligand shared between dimeric partners</note>
    </ligand>
</feature>
<feature type="binding site" evidence="1">
    <location>
        <position position="144"/>
    </location>
    <ligand>
        <name>IMP</name>
        <dbReference type="ChEBI" id="CHEBI:58053"/>
        <note>ligand shared between dimeric partners</note>
    </ligand>
</feature>
<feature type="binding site" description="in other chain" evidence="1">
    <location>
        <position position="225"/>
    </location>
    <ligand>
        <name>IMP</name>
        <dbReference type="ChEBI" id="CHEBI:58053"/>
        <note>ligand shared between dimeric partners</note>
    </ligand>
</feature>
<feature type="binding site" description="in other chain" evidence="1">
    <location>
        <position position="240"/>
    </location>
    <ligand>
        <name>IMP</name>
        <dbReference type="ChEBI" id="CHEBI:58053"/>
        <note>ligand shared between dimeric partners</note>
    </ligand>
</feature>
<feature type="binding site" evidence="1">
    <location>
        <begin position="302"/>
        <end position="308"/>
    </location>
    <ligand>
        <name>substrate</name>
    </ligand>
</feature>
<feature type="binding site" description="in other chain" evidence="1">
    <location>
        <position position="306"/>
    </location>
    <ligand>
        <name>IMP</name>
        <dbReference type="ChEBI" id="CHEBI:58053"/>
        <note>ligand shared between dimeric partners</note>
    </ligand>
</feature>
<feature type="binding site" evidence="1">
    <location>
        <position position="308"/>
    </location>
    <ligand>
        <name>GTP</name>
        <dbReference type="ChEBI" id="CHEBI:37565"/>
    </ligand>
</feature>
<feature type="binding site" evidence="1">
    <location>
        <begin position="334"/>
        <end position="336"/>
    </location>
    <ligand>
        <name>GTP</name>
        <dbReference type="ChEBI" id="CHEBI:37565"/>
    </ligand>
</feature>
<feature type="binding site" evidence="1">
    <location>
        <begin position="416"/>
        <end position="418"/>
    </location>
    <ligand>
        <name>GTP</name>
        <dbReference type="ChEBI" id="CHEBI:37565"/>
    </ligand>
</feature>
<comment type="function">
    <text evidence="1">Plays an important role in the de novo pathway of purine nucleotide biosynthesis. Catalyzes the first committed step in the biosynthesis of AMP from IMP.</text>
</comment>
<comment type="catalytic activity">
    <reaction evidence="1">
        <text>IMP + L-aspartate + GTP = N(6)-(1,2-dicarboxyethyl)-AMP + GDP + phosphate + 2 H(+)</text>
        <dbReference type="Rhea" id="RHEA:15753"/>
        <dbReference type="ChEBI" id="CHEBI:15378"/>
        <dbReference type="ChEBI" id="CHEBI:29991"/>
        <dbReference type="ChEBI" id="CHEBI:37565"/>
        <dbReference type="ChEBI" id="CHEBI:43474"/>
        <dbReference type="ChEBI" id="CHEBI:57567"/>
        <dbReference type="ChEBI" id="CHEBI:58053"/>
        <dbReference type="ChEBI" id="CHEBI:58189"/>
        <dbReference type="EC" id="6.3.4.4"/>
    </reaction>
</comment>
<comment type="cofactor">
    <cofactor evidence="1">
        <name>Mg(2+)</name>
        <dbReference type="ChEBI" id="CHEBI:18420"/>
    </cofactor>
    <text evidence="1">Binds 1 Mg(2+) ion per subunit.</text>
</comment>
<comment type="pathway">
    <text evidence="1">Purine metabolism; AMP biosynthesis via de novo pathway; AMP from IMP: step 1/2.</text>
</comment>
<comment type="subunit">
    <text evidence="1">Homodimer.</text>
</comment>
<comment type="subcellular location">
    <subcellularLocation>
        <location evidence="1">Cytoplasm</location>
    </subcellularLocation>
</comment>
<comment type="similarity">
    <text evidence="1">Belongs to the adenylosuccinate synthetase family.</text>
</comment>
<protein>
    <recommendedName>
        <fullName evidence="1">Adenylosuccinate synthetase</fullName>
        <shortName evidence="1">AMPSase</shortName>
        <shortName evidence="1">AdSS</shortName>
        <ecNumber evidence="1">6.3.4.4</ecNumber>
    </recommendedName>
    <alternativeName>
        <fullName evidence="1">IMP--aspartate ligase</fullName>
    </alternativeName>
</protein>
<keyword id="KW-0963">Cytoplasm</keyword>
<keyword id="KW-0342">GTP-binding</keyword>
<keyword id="KW-0436">Ligase</keyword>
<keyword id="KW-0460">Magnesium</keyword>
<keyword id="KW-0479">Metal-binding</keyword>
<keyword id="KW-0547">Nucleotide-binding</keyword>
<keyword id="KW-0658">Purine biosynthesis</keyword>
<keyword id="KW-1185">Reference proteome</keyword>
<accession>A4G4L2</accession>
<reference key="1">
    <citation type="journal article" date="2007" name="PLoS Genet.">
        <title>A tale of two oxidation states: bacterial colonization of arsenic-rich environments.</title>
        <authorList>
            <person name="Muller D."/>
            <person name="Medigue C."/>
            <person name="Koechler S."/>
            <person name="Barbe V."/>
            <person name="Barakat M."/>
            <person name="Talla E."/>
            <person name="Bonnefoy V."/>
            <person name="Krin E."/>
            <person name="Arsene-Ploetze F."/>
            <person name="Carapito C."/>
            <person name="Chandler M."/>
            <person name="Cournoyer B."/>
            <person name="Cruveiller S."/>
            <person name="Dossat C."/>
            <person name="Duval S."/>
            <person name="Heymann M."/>
            <person name="Leize E."/>
            <person name="Lieutaud A."/>
            <person name="Lievremont D."/>
            <person name="Makita Y."/>
            <person name="Mangenot S."/>
            <person name="Nitschke W."/>
            <person name="Ortet P."/>
            <person name="Perdrial N."/>
            <person name="Schoepp B."/>
            <person name="Siguier P."/>
            <person name="Simeonova D.D."/>
            <person name="Rouy Z."/>
            <person name="Segurens B."/>
            <person name="Turlin E."/>
            <person name="Vallenet D."/>
            <person name="van Dorsselaer A."/>
            <person name="Weiss S."/>
            <person name="Weissenbach J."/>
            <person name="Lett M.-C."/>
            <person name="Danchin A."/>
            <person name="Bertin P.N."/>
        </authorList>
    </citation>
    <scope>NUCLEOTIDE SEQUENCE [LARGE SCALE GENOMIC DNA]</scope>
    <source>
        <strain>ULPAs1</strain>
    </source>
</reference>
<sequence length="432" mass="46273">MAKNVVVVGTQWGDEGKGKIVDWLTDHSQGVVRFQGGHNAGHTLVIGGHKTALQLIPSGIMREGVACYIGNGVVLSVPDVLREIDKLHAIGVEVPSRLKISEACPIILPYHTALDVAREVARGDAKIGTTGKGIGPAYEDKVARRAIRAADLLNEKRFAEKLRENLDYHNFVLANYLKVATVDYQKTLDDALADVPRLKPMVGDVSSALYAAFNAGANLLFEGAQGSLLDVDHGTYPYVTSSNCVAGNASTGSGVGPGMLHYILGITKAYTTRVGSGPFPSELPTDQGVGKHLATVGHEFGTVTGRARRCGWFDAALLKRSVQINGVTGMCFTKLDVLDGLETLRICTGYKLNGKIVDIFPVGAEDAAACEPIYEEMPGWKEATVGAKTLEALPANARAYIDRIEKLVGVPIDMISTGPDREETIVLRHPFK</sequence>